<keyword id="KW-0012">Acyltransferase</keyword>
<keyword id="KW-0963">Cytoplasm</keyword>
<keyword id="KW-1185">Reference proteome</keyword>
<keyword id="KW-0808">Transferase</keyword>
<proteinExistence type="inferred from homology"/>
<gene>
    <name evidence="1" type="primary">bpt</name>
    <name type="ordered locus">Xaut_4292</name>
</gene>
<name>BPT_XANP2</name>
<dbReference type="EC" id="2.3.2.29" evidence="1"/>
<dbReference type="EMBL" id="CP000781">
    <property type="protein sequence ID" value="ABS69513.1"/>
    <property type="molecule type" value="Genomic_DNA"/>
</dbReference>
<dbReference type="SMR" id="A7INB9"/>
<dbReference type="STRING" id="78245.Xaut_4292"/>
<dbReference type="KEGG" id="xau:Xaut_4292"/>
<dbReference type="eggNOG" id="COG2935">
    <property type="taxonomic scope" value="Bacteria"/>
</dbReference>
<dbReference type="HOGENOM" id="CLU_077607_1_0_5"/>
<dbReference type="OrthoDB" id="9782022at2"/>
<dbReference type="PhylomeDB" id="A7INB9"/>
<dbReference type="Proteomes" id="UP000002417">
    <property type="component" value="Chromosome"/>
</dbReference>
<dbReference type="GO" id="GO:0005737">
    <property type="term" value="C:cytoplasm"/>
    <property type="evidence" value="ECO:0007669"/>
    <property type="project" value="UniProtKB-SubCell"/>
</dbReference>
<dbReference type="GO" id="GO:0004057">
    <property type="term" value="F:arginyl-tRNA--protein transferase activity"/>
    <property type="evidence" value="ECO:0007669"/>
    <property type="project" value="InterPro"/>
</dbReference>
<dbReference type="GO" id="GO:0008914">
    <property type="term" value="F:leucyl-tRNA--protein transferase activity"/>
    <property type="evidence" value="ECO:0007669"/>
    <property type="project" value="UniProtKB-UniRule"/>
</dbReference>
<dbReference type="GO" id="GO:0071596">
    <property type="term" value="P:ubiquitin-dependent protein catabolic process via the N-end rule pathway"/>
    <property type="evidence" value="ECO:0007669"/>
    <property type="project" value="InterPro"/>
</dbReference>
<dbReference type="HAMAP" id="MF_00689">
    <property type="entry name" value="Bpt"/>
    <property type="match status" value="1"/>
</dbReference>
<dbReference type="InterPro" id="IPR016181">
    <property type="entry name" value="Acyl_CoA_acyltransferase"/>
</dbReference>
<dbReference type="InterPro" id="IPR017138">
    <property type="entry name" value="Asp_Glu_LeuTrfase"/>
</dbReference>
<dbReference type="InterPro" id="IPR030700">
    <property type="entry name" value="N-end_Aminoacyl_Trfase"/>
</dbReference>
<dbReference type="InterPro" id="IPR007472">
    <property type="entry name" value="N-end_Aminoacyl_Trfase_C"/>
</dbReference>
<dbReference type="InterPro" id="IPR007471">
    <property type="entry name" value="N-end_Aminoacyl_Trfase_N"/>
</dbReference>
<dbReference type="NCBIfam" id="NF002341">
    <property type="entry name" value="PRK01305.1-1"/>
    <property type="match status" value="1"/>
</dbReference>
<dbReference type="NCBIfam" id="NF002342">
    <property type="entry name" value="PRK01305.1-3"/>
    <property type="match status" value="1"/>
</dbReference>
<dbReference type="NCBIfam" id="NF002343">
    <property type="entry name" value="PRK01305.1-4"/>
    <property type="match status" value="1"/>
</dbReference>
<dbReference type="NCBIfam" id="NF002346">
    <property type="entry name" value="PRK01305.2-3"/>
    <property type="match status" value="1"/>
</dbReference>
<dbReference type="PANTHER" id="PTHR21367">
    <property type="entry name" value="ARGININE-TRNA-PROTEIN TRANSFERASE 1"/>
    <property type="match status" value="1"/>
</dbReference>
<dbReference type="PANTHER" id="PTHR21367:SF1">
    <property type="entry name" value="ARGINYL-TRNA--PROTEIN TRANSFERASE 1"/>
    <property type="match status" value="1"/>
</dbReference>
<dbReference type="Pfam" id="PF04377">
    <property type="entry name" value="ATE_C"/>
    <property type="match status" value="1"/>
</dbReference>
<dbReference type="Pfam" id="PF04376">
    <property type="entry name" value="ATE_N"/>
    <property type="match status" value="1"/>
</dbReference>
<dbReference type="PIRSF" id="PIRSF037208">
    <property type="entry name" value="ATE_pro_prd"/>
    <property type="match status" value="1"/>
</dbReference>
<dbReference type="SUPFAM" id="SSF55729">
    <property type="entry name" value="Acyl-CoA N-acyltransferases (Nat)"/>
    <property type="match status" value="1"/>
</dbReference>
<organism>
    <name type="scientific">Xanthobacter autotrophicus (strain ATCC BAA-1158 / Py2)</name>
    <dbReference type="NCBI Taxonomy" id="78245"/>
    <lineage>
        <taxon>Bacteria</taxon>
        <taxon>Pseudomonadati</taxon>
        <taxon>Pseudomonadota</taxon>
        <taxon>Alphaproteobacteria</taxon>
        <taxon>Hyphomicrobiales</taxon>
        <taxon>Xanthobacteraceae</taxon>
        <taxon>Xanthobacter</taxon>
    </lineage>
</organism>
<feature type="chain" id="PRO_1000132002" description="Aspartate/glutamate leucyltransferase">
    <location>
        <begin position="1"/>
        <end position="249"/>
    </location>
</feature>
<reference key="1">
    <citation type="submission" date="2007-07" db="EMBL/GenBank/DDBJ databases">
        <title>Complete sequence of chromosome of Xanthobacter autotrophicus Py2.</title>
        <authorList>
            <consortium name="US DOE Joint Genome Institute"/>
            <person name="Copeland A."/>
            <person name="Lucas S."/>
            <person name="Lapidus A."/>
            <person name="Barry K."/>
            <person name="Glavina del Rio T."/>
            <person name="Hammon N."/>
            <person name="Israni S."/>
            <person name="Dalin E."/>
            <person name="Tice H."/>
            <person name="Pitluck S."/>
            <person name="Sims D."/>
            <person name="Brettin T."/>
            <person name="Bruce D."/>
            <person name="Detter J.C."/>
            <person name="Han C."/>
            <person name="Tapia R."/>
            <person name="Brainard J."/>
            <person name="Schmutz J."/>
            <person name="Larimer F."/>
            <person name="Land M."/>
            <person name="Hauser L."/>
            <person name="Kyrpides N."/>
            <person name="Kim E."/>
            <person name="Ensigns S.A."/>
            <person name="Richardson P."/>
        </authorList>
    </citation>
    <scope>NUCLEOTIDE SEQUENCE [LARGE SCALE GENOMIC DNA]</scope>
    <source>
        <strain>ATCC BAA-1158 / Py2</strain>
    </source>
</reference>
<accession>A7INB9</accession>
<protein>
    <recommendedName>
        <fullName evidence="1">Aspartate/glutamate leucyltransferase</fullName>
        <ecNumber evidence="1">2.3.2.29</ecNumber>
    </recommendedName>
</protein>
<comment type="function">
    <text evidence="1">Functions in the N-end rule pathway of protein degradation where it conjugates Leu from its aminoacyl-tRNA to the N-termini of proteins containing an N-terminal aspartate or glutamate.</text>
</comment>
<comment type="catalytic activity">
    <reaction evidence="1">
        <text>N-terminal L-glutamyl-[protein] + L-leucyl-tRNA(Leu) = N-terminal L-leucyl-L-glutamyl-[protein] + tRNA(Leu) + H(+)</text>
        <dbReference type="Rhea" id="RHEA:50412"/>
        <dbReference type="Rhea" id="RHEA-COMP:9613"/>
        <dbReference type="Rhea" id="RHEA-COMP:9622"/>
        <dbReference type="Rhea" id="RHEA-COMP:12664"/>
        <dbReference type="Rhea" id="RHEA-COMP:12668"/>
        <dbReference type="ChEBI" id="CHEBI:15378"/>
        <dbReference type="ChEBI" id="CHEBI:64721"/>
        <dbReference type="ChEBI" id="CHEBI:78442"/>
        <dbReference type="ChEBI" id="CHEBI:78494"/>
        <dbReference type="ChEBI" id="CHEBI:133041"/>
        <dbReference type="EC" id="2.3.2.29"/>
    </reaction>
</comment>
<comment type="catalytic activity">
    <reaction evidence="1">
        <text>N-terminal L-aspartyl-[protein] + L-leucyl-tRNA(Leu) = N-terminal L-leucyl-L-aspartyl-[protein] + tRNA(Leu) + H(+)</text>
        <dbReference type="Rhea" id="RHEA:50420"/>
        <dbReference type="Rhea" id="RHEA-COMP:9613"/>
        <dbReference type="Rhea" id="RHEA-COMP:9622"/>
        <dbReference type="Rhea" id="RHEA-COMP:12669"/>
        <dbReference type="Rhea" id="RHEA-COMP:12674"/>
        <dbReference type="ChEBI" id="CHEBI:15378"/>
        <dbReference type="ChEBI" id="CHEBI:64720"/>
        <dbReference type="ChEBI" id="CHEBI:78442"/>
        <dbReference type="ChEBI" id="CHEBI:78494"/>
        <dbReference type="ChEBI" id="CHEBI:133042"/>
        <dbReference type="EC" id="2.3.2.29"/>
    </reaction>
</comment>
<comment type="subcellular location">
    <subcellularLocation>
        <location evidence="1">Cytoplasm</location>
    </subcellularLocation>
</comment>
<comment type="similarity">
    <text evidence="1">Belongs to the R-transferase family. Bpt subfamily.</text>
</comment>
<evidence type="ECO:0000255" key="1">
    <source>
        <dbReference type="HAMAP-Rule" id="MF_00689"/>
    </source>
</evidence>
<sequence>MSEHPRDTPQFYLTAPSPCPYLPGREERKVFTHLVGDKAASLNDVLTQGGFRRSQSIAYRPACEGCKACVSVRICVDDFTPGRSFRRVQADNSDLIGQIKPATPTSEQYALFRSYVTGRHGTGGMADMSVLDYAMMVEDTHVHTRLVEYRKRGPDSRIIPRGTGDLMAVALTDVLTDGLSMVYSFYNPQVHDRSLGTFLILDHITRARQMGLPYVYLGYWVQGSRKMDYKRRYLPQERLTPHGWERVEK</sequence>